<name>YGD6_SCHPO</name>
<proteinExistence type="inferred from homology"/>
<keyword id="KW-0963">Cytoplasm</keyword>
<keyword id="KW-0560">Oxidoreductase</keyword>
<keyword id="KW-1185">Reference proteome</keyword>
<protein>
    <recommendedName>
        <fullName>Zinc-type alcohol dehydrogenase-like protein C1773.06c</fullName>
        <ecNumber>1.-.-.-</ecNumber>
    </recommendedName>
</protein>
<reference key="1">
    <citation type="journal article" date="2002" name="Nature">
        <title>The genome sequence of Schizosaccharomyces pombe.</title>
        <authorList>
            <person name="Wood V."/>
            <person name="Gwilliam R."/>
            <person name="Rajandream M.A."/>
            <person name="Lyne M.H."/>
            <person name="Lyne R."/>
            <person name="Stewart A."/>
            <person name="Sgouros J.G."/>
            <person name="Peat N."/>
            <person name="Hayles J."/>
            <person name="Baker S.G."/>
            <person name="Basham D."/>
            <person name="Bowman S."/>
            <person name="Brooks K."/>
            <person name="Brown D."/>
            <person name="Brown S."/>
            <person name="Chillingworth T."/>
            <person name="Churcher C.M."/>
            <person name="Collins M."/>
            <person name="Connor R."/>
            <person name="Cronin A."/>
            <person name="Davis P."/>
            <person name="Feltwell T."/>
            <person name="Fraser A."/>
            <person name="Gentles S."/>
            <person name="Goble A."/>
            <person name="Hamlin N."/>
            <person name="Harris D.E."/>
            <person name="Hidalgo J."/>
            <person name="Hodgson G."/>
            <person name="Holroyd S."/>
            <person name="Hornsby T."/>
            <person name="Howarth S."/>
            <person name="Huckle E.J."/>
            <person name="Hunt S."/>
            <person name="Jagels K."/>
            <person name="James K.D."/>
            <person name="Jones L."/>
            <person name="Jones M."/>
            <person name="Leather S."/>
            <person name="McDonald S."/>
            <person name="McLean J."/>
            <person name="Mooney P."/>
            <person name="Moule S."/>
            <person name="Mungall K.L."/>
            <person name="Murphy L.D."/>
            <person name="Niblett D."/>
            <person name="Odell C."/>
            <person name="Oliver K."/>
            <person name="O'Neil S."/>
            <person name="Pearson D."/>
            <person name="Quail M.A."/>
            <person name="Rabbinowitsch E."/>
            <person name="Rutherford K.M."/>
            <person name="Rutter S."/>
            <person name="Saunders D."/>
            <person name="Seeger K."/>
            <person name="Sharp S."/>
            <person name="Skelton J."/>
            <person name="Simmonds M.N."/>
            <person name="Squares R."/>
            <person name="Squares S."/>
            <person name="Stevens K."/>
            <person name="Taylor K."/>
            <person name="Taylor R.G."/>
            <person name="Tivey A."/>
            <person name="Walsh S.V."/>
            <person name="Warren T."/>
            <person name="Whitehead S."/>
            <person name="Woodward J.R."/>
            <person name="Volckaert G."/>
            <person name="Aert R."/>
            <person name="Robben J."/>
            <person name="Grymonprez B."/>
            <person name="Weltjens I."/>
            <person name="Vanstreels E."/>
            <person name="Rieger M."/>
            <person name="Schaefer M."/>
            <person name="Mueller-Auer S."/>
            <person name="Gabel C."/>
            <person name="Fuchs M."/>
            <person name="Duesterhoeft A."/>
            <person name="Fritzc C."/>
            <person name="Holzer E."/>
            <person name="Moestl D."/>
            <person name="Hilbert H."/>
            <person name="Borzym K."/>
            <person name="Langer I."/>
            <person name="Beck A."/>
            <person name="Lehrach H."/>
            <person name="Reinhardt R."/>
            <person name="Pohl T.M."/>
            <person name="Eger P."/>
            <person name="Zimmermann W."/>
            <person name="Wedler H."/>
            <person name="Wambutt R."/>
            <person name="Purnelle B."/>
            <person name="Goffeau A."/>
            <person name="Cadieu E."/>
            <person name="Dreano S."/>
            <person name="Gloux S."/>
            <person name="Lelaure V."/>
            <person name="Mottier S."/>
            <person name="Galibert F."/>
            <person name="Aves S.J."/>
            <person name="Xiang Z."/>
            <person name="Hunt C."/>
            <person name="Moore K."/>
            <person name="Hurst S.M."/>
            <person name="Lucas M."/>
            <person name="Rochet M."/>
            <person name="Gaillardin C."/>
            <person name="Tallada V.A."/>
            <person name="Garzon A."/>
            <person name="Thode G."/>
            <person name="Daga R.R."/>
            <person name="Cruzado L."/>
            <person name="Jimenez J."/>
            <person name="Sanchez M."/>
            <person name="del Rey F."/>
            <person name="Benito J."/>
            <person name="Dominguez A."/>
            <person name="Revuelta J.L."/>
            <person name="Moreno S."/>
            <person name="Armstrong J."/>
            <person name="Forsburg S.L."/>
            <person name="Cerutti L."/>
            <person name="Lowe T."/>
            <person name="McCombie W.R."/>
            <person name="Paulsen I."/>
            <person name="Potashkin J."/>
            <person name="Shpakovski G.V."/>
            <person name="Ussery D."/>
            <person name="Barrell B.G."/>
            <person name="Nurse P."/>
        </authorList>
    </citation>
    <scope>NUCLEOTIDE SEQUENCE [LARGE SCALE GENOMIC DNA]</scope>
    <source>
        <strain>972 / ATCC 24843</strain>
    </source>
</reference>
<reference key="2">
    <citation type="journal article" date="2006" name="Nat. Biotechnol.">
        <title>ORFeome cloning and global analysis of protein localization in the fission yeast Schizosaccharomyces pombe.</title>
        <authorList>
            <person name="Matsuyama A."/>
            <person name="Arai R."/>
            <person name="Yashiroda Y."/>
            <person name="Shirai A."/>
            <person name="Kamata A."/>
            <person name="Sekido S."/>
            <person name="Kobayashi Y."/>
            <person name="Hashimoto A."/>
            <person name="Hamamoto M."/>
            <person name="Hiraoka Y."/>
            <person name="Horinouchi S."/>
            <person name="Yoshida M."/>
        </authorList>
    </citation>
    <scope>SUBCELLULAR LOCATION [LARGE SCALE ANALYSIS]</scope>
</reference>
<comment type="subcellular location">
    <subcellularLocation>
        <location evidence="1">Cytoplasm</location>
    </subcellularLocation>
</comment>
<comment type="similarity">
    <text evidence="2">Belongs to the zinc-containing alcohol dehydrogenase family. Quinone oxidoreductase subfamily.</text>
</comment>
<dbReference type="EC" id="1.-.-.-"/>
<dbReference type="EMBL" id="CU329671">
    <property type="protein sequence ID" value="CAA21911.1"/>
    <property type="molecule type" value="Genomic_DNA"/>
</dbReference>
<dbReference type="PIR" id="T39671">
    <property type="entry name" value="T39671"/>
</dbReference>
<dbReference type="SMR" id="O94564"/>
<dbReference type="BioGRID" id="276676">
    <property type="interactions" value="12"/>
</dbReference>
<dbReference type="STRING" id="284812.O94564"/>
<dbReference type="PaxDb" id="4896-SPBC1773.06c.1"/>
<dbReference type="EnsemblFungi" id="SPBC1773.06c.1">
    <property type="protein sequence ID" value="SPBC1773.06c.1:pep"/>
    <property type="gene ID" value="SPBC1773.06c"/>
</dbReference>
<dbReference type="KEGG" id="spo:2540139"/>
<dbReference type="PomBase" id="SPBC1773.06c"/>
<dbReference type="VEuPathDB" id="FungiDB:SPBC1773.06c"/>
<dbReference type="eggNOG" id="KOG1198">
    <property type="taxonomic scope" value="Eukaryota"/>
</dbReference>
<dbReference type="HOGENOM" id="CLU_026673_3_4_1"/>
<dbReference type="InParanoid" id="O94564"/>
<dbReference type="OMA" id="GWEREDI"/>
<dbReference type="PhylomeDB" id="O94564"/>
<dbReference type="PRO" id="PR:O94564"/>
<dbReference type="Proteomes" id="UP000002485">
    <property type="component" value="Chromosome II"/>
</dbReference>
<dbReference type="GO" id="GO:0005829">
    <property type="term" value="C:cytosol"/>
    <property type="evidence" value="ECO:0007005"/>
    <property type="project" value="PomBase"/>
</dbReference>
<dbReference type="GO" id="GO:0016491">
    <property type="term" value="F:oxidoreductase activity"/>
    <property type="evidence" value="ECO:0007669"/>
    <property type="project" value="UniProtKB-KW"/>
</dbReference>
<dbReference type="CDD" id="cd08276">
    <property type="entry name" value="MDR7"/>
    <property type="match status" value="1"/>
</dbReference>
<dbReference type="Gene3D" id="3.90.180.10">
    <property type="entry name" value="Medium-chain alcohol dehydrogenases, catalytic domain"/>
    <property type="match status" value="1"/>
</dbReference>
<dbReference type="Gene3D" id="3.40.50.720">
    <property type="entry name" value="NAD(P)-binding Rossmann-like Domain"/>
    <property type="match status" value="1"/>
</dbReference>
<dbReference type="InterPro" id="IPR013149">
    <property type="entry name" value="ADH-like_C"/>
</dbReference>
<dbReference type="InterPro" id="IPR013154">
    <property type="entry name" value="ADH-like_N"/>
</dbReference>
<dbReference type="InterPro" id="IPR011032">
    <property type="entry name" value="GroES-like_sf"/>
</dbReference>
<dbReference type="InterPro" id="IPR036291">
    <property type="entry name" value="NAD(P)-bd_dom_sf"/>
</dbReference>
<dbReference type="InterPro" id="IPR020843">
    <property type="entry name" value="PKS_ER"/>
</dbReference>
<dbReference type="InterPro" id="IPR052711">
    <property type="entry name" value="Zinc_ADH-like"/>
</dbReference>
<dbReference type="PANTHER" id="PTHR45033">
    <property type="match status" value="1"/>
</dbReference>
<dbReference type="PANTHER" id="PTHR45033:SF2">
    <property type="entry name" value="ZINC-TYPE ALCOHOL DEHYDROGENASE-LIKE PROTEIN C1773.06C"/>
    <property type="match status" value="1"/>
</dbReference>
<dbReference type="Pfam" id="PF08240">
    <property type="entry name" value="ADH_N"/>
    <property type="match status" value="1"/>
</dbReference>
<dbReference type="Pfam" id="PF00107">
    <property type="entry name" value="ADH_zinc_N"/>
    <property type="match status" value="1"/>
</dbReference>
<dbReference type="SMART" id="SM00829">
    <property type="entry name" value="PKS_ER"/>
    <property type="match status" value="1"/>
</dbReference>
<dbReference type="SUPFAM" id="SSF50129">
    <property type="entry name" value="GroES-like"/>
    <property type="match status" value="1"/>
</dbReference>
<dbReference type="SUPFAM" id="SSF51735">
    <property type="entry name" value="NAD(P)-binding Rossmann-fold domains"/>
    <property type="match status" value="1"/>
</dbReference>
<accession>O94564</accession>
<evidence type="ECO:0000269" key="1">
    <source>
    </source>
</evidence>
<evidence type="ECO:0000305" key="2"/>
<gene>
    <name type="ORF">SPBC1773.06c</name>
</gene>
<organism>
    <name type="scientific">Schizosaccharomyces pombe (strain 972 / ATCC 24843)</name>
    <name type="common">Fission yeast</name>
    <dbReference type="NCBI Taxonomy" id="284812"/>
    <lineage>
        <taxon>Eukaryota</taxon>
        <taxon>Fungi</taxon>
        <taxon>Dikarya</taxon>
        <taxon>Ascomycota</taxon>
        <taxon>Taphrinomycotina</taxon>
        <taxon>Schizosaccharomycetes</taxon>
        <taxon>Schizosaccharomycetales</taxon>
        <taxon>Schizosaccharomycetaceae</taxon>
        <taxon>Schizosaccharomyces</taxon>
    </lineage>
</organism>
<feature type="chain" id="PRO_0000339117" description="Zinc-type alcohol dehydrogenase-like protein C1773.06c">
    <location>
        <begin position="1"/>
        <end position="346"/>
    </location>
</feature>
<sequence>MALRYVVHDEISGFDQLKPEEYEVPQKLNPGEVLVKLKAASLNYRDLIITKGLYPLPLQLPVVPGSDGAGIIEKVGEDVEGFEKGDSVVCNFFTNYLDGTPTDFATHSALGGTRDGCFQKYAVLPAHALVHAPKNLSFEEIATLPCAAVTAWNGLFGSKEHQVKPGNNVLVLGTGGVSTFALQFALAAGANVTVTSSSDEKLEFAKKLGATHTINYKKTPQWASPALKMTNGVGYHHVIEVGGEKTLPQSIACLAKDGMISMIGFVASEGTTPNLTSIIGQILNRNANIRGIFVGSVSMFRDMVACIEAKDIHPVVDKVFPFDQLKEAYEYQWSQAHIGKVVLKID</sequence>